<gene>
    <name type="ordered locus">SSP1683</name>
</gene>
<keyword id="KW-1185">Reference proteome</keyword>
<proteinExistence type="inferred from homology"/>
<evidence type="ECO:0000255" key="1">
    <source>
        <dbReference type="HAMAP-Rule" id="MF_01851"/>
    </source>
</evidence>
<organism>
    <name type="scientific">Staphylococcus saprophyticus subsp. saprophyticus (strain ATCC 15305 / DSM 20229 / NCIMB 8711 / NCTC 7292 / S-41)</name>
    <dbReference type="NCBI Taxonomy" id="342451"/>
    <lineage>
        <taxon>Bacteria</taxon>
        <taxon>Bacillati</taxon>
        <taxon>Bacillota</taxon>
        <taxon>Bacilli</taxon>
        <taxon>Bacillales</taxon>
        <taxon>Staphylococcaceae</taxon>
        <taxon>Staphylococcus</taxon>
    </lineage>
</organism>
<feature type="chain" id="PRO_0000348336" description="UPF0637 protein SSP1683">
    <location>
        <begin position="1"/>
        <end position="203"/>
    </location>
</feature>
<sequence>MTKYTFKPKNFKAFTVDGLDARMEALNERVRPQLNHLGDYFAQYLETATGEIFYPHVAKHARRSVNPPKDTWVAFATNNRGYKMQPHFQIGLFENQLFVMYGVMHEAKDKAQQVQAFVDQFDALRNLPSDYSVSLDHMSQEKTYIHNMTDEDLFKAFRRVKEVKKGEFFVARTLSPNSEHLKNDKAFLSFLEETFEQLLKFYK</sequence>
<comment type="similarity">
    <text evidence="1">Belongs to the UPF0637 family.</text>
</comment>
<dbReference type="EMBL" id="AP008934">
    <property type="protein sequence ID" value="BAE18828.1"/>
    <property type="molecule type" value="Genomic_DNA"/>
</dbReference>
<dbReference type="RefSeq" id="WP_011303407.1">
    <property type="nucleotide sequence ID" value="NZ_MTGA01000039.1"/>
</dbReference>
<dbReference type="SMR" id="Q49WN1"/>
<dbReference type="GeneID" id="3616494"/>
<dbReference type="KEGG" id="ssp:SSP1683"/>
<dbReference type="PATRIC" id="fig|342451.11.peg.1682"/>
<dbReference type="eggNOG" id="COG4493">
    <property type="taxonomic scope" value="Bacteria"/>
</dbReference>
<dbReference type="HOGENOM" id="CLU_096059_0_0_9"/>
<dbReference type="OrthoDB" id="9812818at2"/>
<dbReference type="Proteomes" id="UP000006371">
    <property type="component" value="Chromosome"/>
</dbReference>
<dbReference type="Gene3D" id="3.30.930.20">
    <property type="entry name" value="Protein of unknown function DUF1054"/>
    <property type="match status" value="1"/>
</dbReference>
<dbReference type="HAMAP" id="MF_01851">
    <property type="entry name" value="UPF0637"/>
    <property type="match status" value="1"/>
</dbReference>
<dbReference type="InterPro" id="IPR009403">
    <property type="entry name" value="UPF0637"/>
</dbReference>
<dbReference type="InterPro" id="IPR053707">
    <property type="entry name" value="UPF0637_domain_sf"/>
</dbReference>
<dbReference type="Pfam" id="PF06335">
    <property type="entry name" value="DUF1054"/>
    <property type="match status" value="1"/>
</dbReference>
<dbReference type="PIRSF" id="PIRSF021332">
    <property type="entry name" value="DUF1054"/>
    <property type="match status" value="1"/>
</dbReference>
<dbReference type="SUPFAM" id="SSF142913">
    <property type="entry name" value="YktB/PF0168-like"/>
    <property type="match status" value="1"/>
</dbReference>
<reference key="1">
    <citation type="journal article" date="2005" name="Proc. Natl. Acad. Sci. U.S.A.">
        <title>Whole genome sequence of Staphylococcus saprophyticus reveals the pathogenesis of uncomplicated urinary tract infection.</title>
        <authorList>
            <person name="Kuroda M."/>
            <person name="Yamashita A."/>
            <person name="Hirakawa H."/>
            <person name="Kumano M."/>
            <person name="Morikawa K."/>
            <person name="Higashide M."/>
            <person name="Maruyama A."/>
            <person name="Inose Y."/>
            <person name="Matoba K."/>
            <person name="Toh H."/>
            <person name="Kuhara S."/>
            <person name="Hattori M."/>
            <person name="Ohta T."/>
        </authorList>
    </citation>
    <scope>NUCLEOTIDE SEQUENCE [LARGE SCALE GENOMIC DNA]</scope>
    <source>
        <strain>ATCC 15305 / DSM 20229 / NCIMB 8711 / NCTC 7292 / S-41</strain>
    </source>
</reference>
<protein>
    <recommendedName>
        <fullName evidence="1">UPF0637 protein SSP1683</fullName>
    </recommendedName>
</protein>
<name>Y1683_STAS1</name>
<accession>Q49WN1</accession>